<gene>
    <name type="primary">ldhD</name>
    <name type="synonym">ddh</name>
</gene>
<evidence type="ECO:0000250" key="1">
    <source>
        <dbReference type="UniProtKB" id="P26297"/>
    </source>
</evidence>
<evidence type="ECO:0000250" key="2">
    <source>
        <dbReference type="UniProtKB" id="P30901"/>
    </source>
</evidence>
<evidence type="ECO:0000305" key="3"/>
<proteinExistence type="evidence at protein level"/>
<name>LDHD_STAAU</name>
<protein>
    <recommendedName>
        <fullName>D-lactate dehydrogenase</fullName>
        <shortName>D-LDH</shortName>
        <ecNumber>1.1.1.28</ecNumber>
    </recommendedName>
    <alternativeName>
        <fullName>D-specific 2-hydroxyacid dehydrogenase</fullName>
    </alternativeName>
</protein>
<comment type="catalytic activity">
    <reaction>
        <text>(R)-lactate + NAD(+) = pyruvate + NADH + H(+)</text>
        <dbReference type="Rhea" id="RHEA:16369"/>
        <dbReference type="ChEBI" id="CHEBI:15361"/>
        <dbReference type="ChEBI" id="CHEBI:15378"/>
        <dbReference type="ChEBI" id="CHEBI:16004"/>
        <dbReference type="ChEBI" id="CHEBI:57540"/>
        <dbReference type="ChEBI" id="CHEBI:57945"/>
        <dbReference type="EC" id="1.1.1.28"/>
    </reaction>
</comment>
<comment type="similarity">
    <text evidence="3">Belongs to the D-isomer specific 2-hydroxyacid dehydrogenase family.</text>
</comment>
<feature type="chain" id="PRO_0000075964" description="D-lactate dehydrogenase">
    <location>
        <begin position="1"/>
        <end position="330"/>
    </location>
</feature>
<feature type="active site" evidence="1">
    <location>
        <position position="235"/>
    </location>
</feature>
<feature type="active site" evidence="1">
    <location>
        <position position="264"/>
    </location>
</feature>
<feature type="active site" description="Proton donor" evidence="1">
    <location>
        <position position="296"/>
    </location>
</feature>
<feature type="binding site" evidence="2">
    <location>
        <begin position="156"/>
        <end position="157"/>
    </location>
    <ligand>
        <name>NAD(+)</name>
        <dbReference type="ChEBI" id="CHEBI:57540"/>
    </ligand>
</feature>
<feature type="binding site" evidence="1">
    <location>
        <position position="176"/>
    </location>
    <ligand>
        <name>NAD(+)</name>
        <dbReference type="ChEBI" id="CHEBI:57540"/>
    </ligand>
</feature>
<feature type="binding site" evidence="2">
    <location>
        <begin position="206"/>
        <end position="207"/>
    </location>
    <ligand>
        <name>NAD(+)</name>
        <dbReference type="ChEBI" id="CHEBI:57540"/>
    </ligand>
</feature>
<feature type="binding site" evidence="2">
    <location>
        <begin position="233"/>
        <end position="235"/>
    </location>
    <ligand>
        <name>NAD(+)</name>
        <dbReference type="ChEBI" id="CHEBI:57540"/>
    </ligand>
</feature>
<feature type="binding site" evidence="2">
    <location>
        <position position="259"/>
    </location>
    <ligand>
        <name>NAD(+)</name>
        <dbReference type="ChEBI" id="CHEBI:57540"/>
    </ligand>
</feature>
<organism>
    <name type="scientific">Staphylococcus aureus</name>
    <dbReference type="NCBI Taxonomy" id="1280"/>
    <lineage>
        <taxon>Bacteria</taxon>
        <taxon>Bacillati</taxon>
        <taxon>Bacillota</taxon>
        <taxon>Bacilli</taxon>
        <taxon>Bacillales</taxon>
        <taxon>Staphylococcaceae</taxon>
        <taxon>Staphylococcus</taxon>
    </lineage>
</organism>
<reference key="1">
    <citation type="journal article" date="1996" name="Antimicrob. Agents Chemother.">
        <title>Overproduction of a 37-kilodalton cytoplasmic protein homologous to NAD(+)-linked D-lactate dehydrogenase associated with vancomycin resistance in Staphylococcus aureus.</title>
        <authorList>
            <person name="Milewski W.M."/>
            <person name="Boyle-Vavra S."/>
            <person name="Moreira B."/>
            <person name="Ebert C.C."/>
            <person name="Daum R.S."/>
        </authorList>
    </citation>
    <scope>NUCLEOTIDE SEQUENCE [GENOMIC DNA]</scope>
    <scope>PARTIAL PROTEIN SEQUENCE</scope>
    <scope>FUNCTION</scope>
    <source>
        <strain>523k</strain>
    </source>
</reference>
<keyword id="KW-0903">Direct protein sequencing</keyword>
<keyword id="KW-0520">NAD</keyword>
<keyword id="KW-0560">Oxidoreductase</keyword>
<sequence>MTKIMFFGTRDYEKEMALNWGKKNNVEVTTSKELLSSATVDQLKDYDGVTTMQFGKLENDVYPKLESYGIKQIAQRTAGFDMYDLDLAKKHNIVISNVPSYSPETIAEYSVSIALQLVRRFPDIERRVQAHDFTWQAEIMSKPVKNMTVAIIGTGRIGAATAKIYAGFGATITAYDAYPNKDLDFLTYKDSVKEAIKDADIISLHVPANKESYHLFDKAMFDHVKKGAILVNAARGAVINTPDLIAAVNDGTLLGAAIDTYENEAAYFTNDWTNKDIDDKTLLELIEHERILVTPHIAFFSDEAVQNLVEGGLNAALSVINTGTCETRLN</sequence>
<dbReference type="EC" id="1.1.1.28"/>
<dbReference type="EMBL" id="U31175">
    <property type="protein sequence ID" value="AAB17663.1"/>
    <property type="molecule type" value="Genomic_DNA"/>
</dbReference>
<dbReference type="RefSeq" id="WP_000161536.1">
    <property type="nucleotide sequence ID" value="NZ_WWFR01000002.1"/>
</dbReference>
<dbReference type="SMR" id="P72357"/>
<dbReference type="OMA" id="IAFYTNT"/>
<dbReference type="GO" id="GO:0008720">
    <property type="term" value="F:D-lactate dehydrogenase activity"/>
    <property type="evidence" value="ECO:0007669"/>
    <property type="project" value="UniProtKB-EC"/>
</dbReference>
<dbReference type="GO" id="GO:0051287">
    <property type="term" value="F:NAD binding"/>
    <property type="evidence" value="ECO:0007669"/>
    <property type="project" value="InterPro"/>
</dbReference>
<dbReference type="CDD" id="cd12186">
    <property type="entry name" value="LDH"/>
    <property type="match status" value="1"/>
</dbReference>
<dbReference type="Gene3D" id="3.40.50.720">
    <property type="entry name" value="NAD(P)-binding Rossmann-like Domain"/>
    <property type="match status" value="2"/>
</dbReference>
<dbReference type="InterPro" id="IPR006139">
    <property type="entry name" value="D-isomer_2_OHA_DH_cat_dom"/>
</dbReference>
<dbReference type="InterPro" id="IPR029753">
    <property type="entry name" value="D-isomer_DH_CS"/>
</dbReference>
<dbReference type="InterPro" id="IPR029752">
    <property type="entry name" value="D-isomer_DH_CS1"/>
</dbReference>
<dbReference type="InterPro" id="IPR006140">
    <property type="entry name" value="D-isomer_DH_NAD-bd"/>
</dbReference>
<dbReference type="InterPro" id="IPR036291">
    <property type="entry name" value="NAD(P)-bd_dom_sf"/>
</dbReference>
<dbReference type="NCBIfam" id="NF006374">
    <property type="entry name" value="PRK08605.1"/>
    <property type="match status" value="1"/>
</dbReference>
<dbReference type="NCBIfam" id="NF009127">
    <property type="entry name" value="PRK12480.1"/>
    <property type="match status" value="1"/>
</dbReference>
<dbReference type="PANTHER" id="PTHR43026">
    <property type="entry name" value="2-HYDROXYACID DEHYDROGENASE HOMOLOG 1-RELATED"/>
    <property type="match status" value="1"/>
</dbReference>
<dbReference type="PANTHER" id="PTHR43026:SF1">
    <property type="entry name" value="2-HYDROXYACID DEHYDROGENASE HOMOLOG 1-RELATED"/>
    <property type="match status" value="1"/>
</dbReference>
<dbReference type="Pfam" id="PF00389">
    <property type="entry name" value="2-Hacid_dh"/>
    <property type="match status" value="1"/>
</dbReference>
<dbReference type="Pfam" id="PF02826">
    <property type="entry name" value="2-Hacid_dh_C"/>
    <property type="match status" value="1"/>
</dbReference>
<dbReference type="SUPFAM" id="SSF52283">
    <property type="entry name" value="Formate/glycerate dehydrogenase catalytic domain-like"/>
    <property type="match status" value="1"/>
</dbReference>
<dbReference type="SUPFAM" id="SSF51735">
    <property type="entry name" value="NAD(P)-binding Rossmann-fold domains"/>
    <property type="match status" value="1"/>
</dbReference>
<dbReference type="PROSITE" id="PS00065">
    <property type="entry name" value="D_2_HYDROXYACID_DH_1"/>
    <property type="match status" value="1"/>
</dbReference>
<dbReference type="PROSITE" id="PS00670">
    <property type="entry name" value="D_2_HYDROXYACID_DH_2"/>
    <property type="match status" value="1"/>
</dbReference>
<dbReference type="PROSITE" id="PS00671">
    <property type="entry name" value="D_2_HYDROXYACID_DH_3"/>
    <property type="match status" value="1"/>
</dbReference>
<accession>P72357</accession>